<sequence>IPRHPTLANVRQAFAEQPLAHAALNSLLVALATAAVTVLIATPMAYVMARHRTKAARAATGWVVVSQAFPFVLLIIPLFLVLKRLRLIDSLTGLVLVYVVWSLPFALWMLAGHARAVPAELEEAAAVDGAGRVRTLTSVTVPLLAPGIAATALFAFVTAWNEFFFALVLLKSPHRQTLPVVLTHFIGAEGVPTSPAGAAAFLATLPSLAFFALVQRRITSGLLTGAVKN</sequence>
<feature type="chain" id="PRO_0000060302" description="Putative ABC transporter permease protein ORF1">
    <location>
        <begin position="1" status="less than"/>
        <end position="229"/>
    </location>
</feature>
<feature type="transmembrane region" description="Helical" evidence="1">
    <location>
        <begin position="27"/>
        <end position="47"/>
    </location>
</feature>
<feature type="transmembrane region" description="Helical" evidence="1">
    <location>
        <begin position="62"/>
        <end position="82"/>
    </location>
</feature>
<feature type="transmembrane region" description="Helical" evidence="1">
    <location>
        <begin position="91"/>
        <end position="111"/>
    </location>
</feature>
<feature type="transmembrane region" description="Helical" evidence="1">
    <location>
        <begin position="150"/>
        <end position="170"/>
    </location>
</feature>
<feature type="transmembrane region" description="Helical" evidence="1">
    <location>
        <begin position="194"/>
        <end position="214"/>
    </location>
</feature>
<feature type="domain" description="ABC transmembrane type-1" evidence="1">
    <location>
        <begin position="23"/>
        <end position="214"/>
    </location>
</feature>
<feature type="non-terminal residue">
    <location>
        <position position="1"/>
    </location>
</feature>
<organism>
    <name type="scientific">Streptomyces antibioticus</name>
    <dbReference type="NCBI Taxonomy" id="1890"/>
    <lineage>
        <taxon>Bacteria</taxon>
        <taxon>Bacillati</taxon>
        <taxon>Actinomycetota</taxon>
        <taxon>Actinomycetes</taxon>
        <taxon>Kitasatosporales</taxon>
        <taxon>Streptomycetaceae</taxon>
        <taxon>Streptomyces</taxon>
    </lineage>
</organism>
<reference key="1">
    <citation type="journal article" date="1993" name="Gene">
        <title>Characterization of a Streptomyces antibioticus gene cluster encoding a glycosyltransferase involved in oleandomycin inactivation.</title>
        <authorList>
            <person name="Hernandez C."/>
            <person name="Olano C."/>
            <person name="Mendez C."/>
            <person name="Salas J.A."/>
        </authorList>
    </citation>
    <scope>NUCLEOTIDE SEQUENCE [GENOMIC DNA]</scope>
    <source>
        <strain>ATCC 11891 / DSM 40868 / BCRC 11580 / NCIMB 11506 / PSA 205</strain>
    </source>
</reference>
<proteinExistence type="inferred from homology"/>
<name>YOE1_STRAT</name>
<protein>
    <recommendedName>
        <fullName>Putative ABC transporter permease protein ORF1</fullName>
    </recommendedName>
</protein>
<dbReference type="EMBL" id="Z22577">
    <property type="protein sequence ID" value="CAA80299.1"/>
    <property type="molecule type" value="Genomic_DNA"/>
</dbReference>
<dbReference type="PIR" id="S33182">
    <property type="entry name" value="S33182"/>
</dbReference>
<dbReference type="SMR" id="Q53683"/>
<dbReference type="GO" id="GO:0005886">
    <property type="term" value="C:plasma membrane"/>
    <property type="evidence" value="ECO:0007669"/>
    <property type="project" value="UniProtKB-SubCell"/>
</dbReference>
<dbReference type="GO" id="GO:0055085">
    <property type="term" value="P:transmembrane transport"/>
    <property type="evidence" value="ECO:0007669"/>
    <property type="project" value="InterPro"/>
</dbReference>
<dbReference type="CDD" id="cd06261">
    <property type="entry name" value="TM_PBP2"/>
    <property type="match status" value="1"/>
</dbReference>
<dbReference type="Gene3D" id="1.10.3720.10">
    <property type="entry name" value="MetI-like"/>
    <property type="match status" value="1"/>
</dbReference>
<dbReference type="InterPro" id="IPR050901">
    <property type="entry name" value="BP-dep_ABC_trans_perm"/>
</dbReference>
<dbReference type="InterPro" id="IPR000515">
    <property type="entry name" value="MetI-like"/>
</dbReference>
<dbReference type="InterPro" id="IPR035906">
    <property type="entry name" value="MetI-like_sf"/>
</dbReference>
<dbReference type="PANTHER" id="PTHR32243:SF18">
    <property type="entry name" value="INNER MEMBRANE ABC TRANSPORTER PERMEASE PROTEIN YCJP"/>
    <property type="match status" value="1"/>
</dbReference>
<dbReference type="PANTHER" id="PTHR32243">
    <property type="entry name" value="MALTOSE TRANSPORT SYSTEM PERMEASE-RELATED"/>
    <property type="match status" value="1"/>
</dbReference>
<dbReference type="Pfam" id="PF00528">
    <property type="entry name" value="BPD_transp_1"/>
    <property type="match status" value="1"/>
</dbReference>
<dbReference type="SUPFAM" id="SSF161098">
    <property type="entry name" value="MetI-like"/>
    <property type="match status" value="1"/>
</dbReference>
<dbReference type="PROSITE" id="PS50928">
    <property type="entry name" value="ABC_TM1"/>
    <property type="match status" value="1"/>
</dbReference>
<comment type="function">
    <text>May participate in oleandomycin secretion during antibiotic production.</text>
</comment>
<comment type="subcellular location">
    <subcellularLocation>
        <location evidence="2">Cell membrane</location>
        <topology evidence="1">Multi-pass membrane protein</topology>
    </subcellularLocation>
</comment>
<comment type="similarity">
    <text evidence="2">Belongs to the binding-protein-dependent transport system permease family. MalFG subfamily.</text>
</comment>
<keyword id="KW-1003">Cell membrane</keyword>
<keyword id="KW-0472">Membrane</keyword>
<keyword id="KW-0812">Transmembrane</keyword>
<keyword id="KW-1133">Transmembrane helix</keyword>
<keyword id="KW-0813">Transport</keyword>
<evidence type="ECO:0000255" key="1">
    <source>
        <dbReference type="PROSITE-ProRule" id="PRU00441"/>
    </source>
</evidence>
<evidence type="ECO:0000305" key="2"/>
<accession>Q53683</accession>